<reference key="1">
    <citation type="journal article" date="2004" name="Nat. Genet.">
        <title>Complete sequencing and characterization of 21,243 full-length human cDNAs.</title>
        <authorList>
            <person name="Ota T."/>
            <person name="Suzuki Y."/>
            <person name="Nishikawa T."/>
            <person name="Otsuki T."/>
            <person name="Sugiyama T."/>
            <person name="Irie R."/>
            <person name="Wakamatsu A."/>
            <person name="Hayashi K."/>
            <person name="Sato H."/>
            <person name="Nagai K."/>
            <person name="Kimura K."/>
            <person name="Makita H."/>
            <person name="Sekine M."/>
            <person name="Obayashi M."/>
            <person name="Nishi T."/>
            <person name="Shibahara T."/>
            <person name="Tanaka T."/>
            <person name="Ishii S."/>
            <person name="Yamamoto J."/>
            <person name="Saito K."/>
            <person name="Kawai Y."/>
            <person name="Isono Y."/>
            <person name="Nakamura Y."/>
            <person name="Nagahari K."/>
            <person name="Murakami K."/>
            <person name="Yasuda T."/>
            <person name="Iwayanagi T."/>
            <person name="Wagatsuma M."/>
            <person name="Shiratori A."/>
            <person name="Sudo H."/>
            <person name="Hosoiri T."/>
            <person name="Kaku Y."/>
            <person name="Kodaira H."/>
            <person name="Kondo H."/>
            <person name="Sugawara M."/>
            <person name="Takahashi M."/>
            <person name="Kanda K."/>
            <person name="Yokoi T."/>
            <person name="Furuya T."/>
            <person name="Kikkawa E."/>
            <person name="Omura Y."/>
            <person name="Abe K."/>
            <person name="Kamihara K."/>
            <person name="Katsuta N."/>
            <person name="Sato K."/>
            <person name="Tanikawa M."/>
            <person name="Yamazaki M."/>
            <person name="Ninomiya K."/>
            <person name="Ishibashi T."/>
            <person name="Yamashita H."/>
            <person name="Murakawa K."/>
            <person name="Fujimori K."/>
            <person name="Tanai H."/>
            <person name="Kimata M."/>
            <person name="Watanabe M."/>
            <person name="Hiraoka S."/>
            <person name="Chiba Y."/>
            <person name="Ishida S."/>
            <person name="Ono Y."/>
            <person name="Takiguchi S."/>
            <person name="Watanabe S."/>
            <person name="Yosida M."/>
            <person name="Hotuta T."/>
            <person name="Kusano J."/>
            <person name="Kanehori K."/>
            <person name="Takahashi-Fujii A."/>
            <person name="Hara H."/>
            <person name="Tanase T.-O."/>
            <person name="Nomura Y."/>
            <person name="Togiya S."/>
            <person name="Komai F."/>
            <person name="Hara R."/>
            <person name="Takeuchi K."/>
            <person name="Arita M."/>
            <person name="Imose N."/>
            <person name="Musashino K."/>
            <person name="Yuuki H."/>
            <person name="Oshima A."/>
            <person name="Sasaki N."/>
            <person name="Aotsuka S."/>
            <person name="Yoshikawa Y."/>
            <person name="Matsunawa H."/>
            <person name="Ichihara T."/>
            <person name="Shiohata N."/>
            <person name="Sano S."/>
            <person name="Moriya S."/>
            <person name="Momiyama H."/>
            <person name="Satoh N."/>
            <person name="Takami S."/>
            <person name="Terashima Y."/>
            <person name="Suzuki O."/>
            <person name="Nakagawa S."/>
            <person name="Senoh A."/>
            <person name="Mizoguchi H."/>
            <person name="Goto Y."/>
            <person name="Shimizu F."/>
            <person name="Wakebe H."/>
            <person name="Hishigaki H."/>
            <person name="Watanabe T."/>
            <person name="Sugiyama A."/>
            <person name="Takemoto M."/>
            <person name="Kawakami B."/>
            <person name="Yamazaki M."/>
            <person name="Watanabe K."/>
            <person name="Kumagai A."/>
            <person name="Itakura S."/>
            <person name="Fukuzumi Y."/>
            <person name="Fujimori Y."/>
            <person name="Komiyama M."/>
            <person name="Tashiro H."/>
            <person name="Tanigami A."/>
            <person name="Fujiwara T."/>
            <person name="Ono T."/>
            <person name="Yamada K."/>
            <person name="Fujii Y."/>
            <person name="Ozaki K."/>
            <person name="Hirao M."/>
            <person name="Ohmori Y."/>
            <person name="Kawabata A."/>
            <person name="Hikiji T."/>
            <person name="Kobatake N."/>
            <person name="Inagaki H."/>
            <person name="Ikema Y."/>
            <person name="Okamoto S."/>
            <person name="Okitani R."/>
            <person name="Kawakami T."/>
            <person name="Noguchi S."/>
            <person name="Itoh T."/>
            <person name="Shigeta K."/>
            <person name="Senba T."/>
            <person name="Matsumura K."/>
            <person name="Nakajima Y."/>
            <person name="Mizuno T."/>
            <person name="Morinaga M."/>
            <person name="Sasaki M."/>
            <person name="Togashi T."/>
            <person name="Oyama M."/>
            <person name="Hata H."/>
            <person name="Watanabe M."/>
            <person name="Komatsu T."/>
            <person name="Mizushima-Sugano J."/>
            <person name="Satoh T."/>
            <person name="Shirai Y."/>
            <person name="Takahashi Y."/>
            <person name="Nakagawa K."/>
            <person name="Okumura K."/>
            <person name="Nagase T."/>
            <person name="Nomura N."/>
            <person name="Kikuchi H."/>
            <person name="Masuho Y."/>
            <person name="Yamashita R."/>
            <person name="Nakai K."/>
            <person name="Yada T."/>
            <person name="Nakamura Y."/>
            <person name="Ohara O."/>
            <person name="Isogai T."/>
            <person name="Sugano S."/>
        </authorList>
    </citation>
    <scope>NUCLEOTIDE SEQUENCE [LARGE SCALE MRNA]</scope>
    <source>
        <tissue>Placenta</tissue>
    </source>
</reference>
<reference key="2">
    <citation type="journal article" date="2004" name="Nature">
        <title>The DNA sequence and biology of human chromosome 19.</title>
        <authorList>
            <person name="Grimwood J."/>
            <person name="Gordon L.A."/>
            <person name="Olsen A.S."/>
            <person name="Terry A."/>
            <person name="Schmutz J."/>
            <person name="Lamerdin J.E."/>
            <person name="Hellsten U."/>
            <person name="Goodstein D."/>
            <person name="Couronne O."/>
            <person name="Tran-Gyamfi M."/>
            <person name="Aerts A."/>
            <person name="Altherr M."/>
            <person name="Ashworth L."/>
            <person name="Bajorek E."/>
            <person name="Black S."/>
            <person name="Branscomb E."/>
            <person name="Caenepeel S."/>
            <person name="Carrano A.V."/>
            <person name="Caoile C."/>
            <person name="Chan Y.M."/>
            <person name="Christensen M."/>
            <person name="Cleland C.A."/>
            <person name="Copeland A."/>
            <person name="Dalin E."/>
            <person name="Dehal P."/>
            <person name="Denys M."/>
            <person name="Detter J.C."/>
            <person name="Escobar J."/>
            <person name="Flowers D."/>
            <person name="Fotopulos D."/>
            <person name="Garcia C."/>
            <person name="Georgescu A.M."/>
            <person name="Glavina T."/>
            <person name="Gomez M."/>
            <person name="Gonzales E."/>
            <person name="Groza M."/>
            <person name="Hammon N."/>
            <person name="Hawkins T."/>
            <person name="Haydu L."/>
            <person name="Ho I."/>
            <person name="Huang W."/>
            <person name="Israni S."/>
            <person name="Jett J."/>
            <person name="Kadner K."/>
            <person name="Kimball H."/>
            <person name="Kobayashi A."/>
            <person name="Larionov V."/>
            <person name="Leem S.-H."/>
            <person name="Lopez F."/>
            <person name="Lou Y."/>
            <person name="Lowry S."/>
            <person name="Malfatti S."/>
            <person name="Martinez D."/>
            <person name="McCready P.M."/>
            <person name="Medina C."/>
            <person name="Morgan J."/>
            <person name="Nelson K."/>
            <person name="Nolan M."/>
            <person name="Ovcharenko I."/>
            <person name="Pitluck S."/>
            <person name="Pollard M."/>
            <person name="Popkie A.P."/>
            <person name="Predki P."/>
            <person name="Quan G."/>
            <person name="Ramirez L."/>
            <person name="Rash S."/>
            <person name="Retterer J."/>
            <person name="Rodriguez A."/>
            <person name="Rogers S."/>
            <person name="Salamov A."/>
            <person name="Salazar A."/>
            <person name="She X."/>
            <person name="Smith D."/>
            <person name="Slezak T."/>
            <person name="Solovyev V."/>
            <person name="Thayer N."/>
            <person name="Tice H."/>
            <person name="Tsai M."/>
            <person name="Ustaszewska A."/>
            <person name="Vo N."/>
            <person name="Wagner M."/>
            <person name="Wheeler J."/>
            <person name="Wu K."/>
            <person name="Xie G."/>
            <person name="Yang J."/>
            <person name="Dubchak I."/>
            <person name="Furey T.S."/>
            <person name="DeJong P."/>
            <person name="Dickson M."/>
            <person name="Gordon D."/>
            <person name="Eichler E.E."/>
            <person name="Pennacchio L.A."/>
            <person name="Richardson P."/>
            <person name="Stubbs L."/>
            <person name="Rokhsar D.S."/>
            <person name="Myers R.M."/>
            <person name="Rubin E.M."/>
            <person name="Lucas S.M."/>
        </authorList>
    </citation>
    <scope>NUCLEOTIDE SEQUENCE [LARGE SCALE GENOMIC DNA]</scope>
</reference>
<reference key="3">
    <citation type="journal article" date="2004" name="Genome Res.">
        <title>The status, quality, and expansion of the NIH full-length cDNA project: the Mammalian Gene Collection (MGC).</title>
        <authorList>
            <consortium name="The MGC Project Team"/>
        </authorList>
    </citation>
    <scope>NUCLEOTIDE SEQUENCE [LARGE SCALE MRNA]</scope>
    <source>
        <tissue>Spleen</tissue>
    </source>
</reference>
<reference key="4">
    <citation type="journal article" date="2011" name="J. Biol. Chem.">
        <title>hSWS1.SWSAP1 is an evolutionarily conserved complex required for efficient homologous recombination repair.</title>
        <authorList>
            <person name="Liu T."/>
            <person name="Wan L."/>
            <person name="Wu Y."/>
            <person name="Chen J."/>
            <person name="Huang J."/>
        </authorList>
    </citation>
    <scope>FUNCTION IN HOMOLOGOUS RECOMBINATION REPAIR</scope>
    <scope>SUBCELLULAR LOCATION</scope>
    <scope>ATPASE ACTIVITY</scope>
    <scope>DNA-BINDING ACTIVITY</scope>
    <scope>INTERACTION WITH RAD51; RAD51B; RAD51C; RAD51D; XRCC3; ZSWIM7</scope>
    <scope>MUTAGENESIS OF LYS-18 AND ASP-96</scope>
</reference>
<accession>Q6NVH7</accession>
<accession>Q8NAM1</accession>
<feature type="chain" id="PRO_0000294240" description="ATPase SWSAP1">
    <location>
        <begin position="1"/>
        <end position="229"/>
    </location>
</feature>
<feature type="region of interest" description="Disordered" evidence="1">
    <location>
        <begin position="209"/>
        <end position="229"/>
    </location>
</feature>
<feature type="sequence variant" id="VAR_033151" description="In dbSNP:rs317926.">
    <original>D</original>
    <variation>G</variation>
    <location>
        <position position="171"/>
    </location>
</feature>
<feature type="mutagenesis site" description="Loss of function in HRR associated with altered ssDNA-stimulated ATPase activity." evidence="2">
    <original>K</original>
    <variation>A</variation>
    <location>
        <position position="18"/>
    </location>
</feature>
<feature type="mutagenesis site" description="Loss of function in HRR associated with altered ssDNA-stimulated ATPase activity." evidence="2">
    <original>D</original>
    <variation>A</variation>
    <location>
        <position position="96"/>
    </location>
</feature>
<feature type="sequence conflict" description="In Ref. 1; BAC03891." evidence="3" ref="1">
    <original>Y</original>
    <variation>C</variation>
    <location>
        <position position="113"/>
    </location>
</feature>
<protein>
    <recommendedName>
        <fullName>ATPase SWSAP1</fullName>
    </recommendedName>
    <alternativeName>
        <fullName>SWIM-type zinc finger 7-associated protein 1</fullName>
    </alternativeName>
    <alternativeName>
        <fullName>SWS1-associated protein 1</fullName>
    </alternativeName>
    <alternativeName>
        <fullName>ZSWIM7-associated protein 1</fullName>
        <shortName>ZSWIM7AP1</shortName>
    </alternativeName>
</protein>
<sequence>MPAAGPPLLLLGTPGSGKTALLFAAALEAAGEGQGPVLFLTRRPLQSMPRGTGTTLDPMRLQKIRFQYPPSTRELFRLLCSAHEAPGPAPSLLLLDGLEEYLAEDPEPQEAAYLIALLLDTAAHFSHRLGPGRDCGLMVALQTQEEAGSGDVLHLALLQRYFPAQCWLQPDAPGPGEHGLRACLEPGGLGPRTEWWVTFRSDGEMMIAPWPTQAGDPSSGKGSSSGGQP</sequence>
<dbReference type="EMBL" id="AK092438">
    <property type="protein sequence ID" value="BAC03891.1"/>
    <property type="molecule type" value="mRNA"/>
</dbReference>
<dbReference type="EMBL" id="AC024575">
    <property type="status" value="NOT_ANNOTATED_CDS"/>
    <property type="molecule type" value="Genomic_DNA"/>
</dbReference>
<dbReference type="EMBL" id="BC068071">
    <property type="protein sequence ID" value="AAH68071.1"/>
    <property type="molecule type" value="mRNA"/>
</dbReference>
<dbReference type="EMBL" id="BC119677">
    <property type="protein sequence ID" value="AAI19678.1"/>
    <property type="molecule type" value="mRNA"/>
</dbReference>
<dbReference type="RefSeq" id="NP_787067.2">
    <property type="nucleotide sequence ID" value="NM_175871.3"/>
</dbReference>
<dbReference type="BioGRID" id="125954">
    <property type="interactions" value="42"/>
</dbReference>
<dbReference type="ComplexPortal" id="CPX-2186">
    <property type="entry name" value="SHU complex"/>
</dbReference>
<dbReference type="CORUM" id="Q6NVH7"/>
<dbReference type="FunCoup" id="Q6NVH7">
    <property type="interactions" value="57"/>
</dbReference>
<dbReference type="IntAct" id="Q6NVH7">
    <property type="interactions" value="227"/>
</dbReference>
<dbReference type="STRING" id="9606.ENSP00000310008"/>
<dbReference type="GlyGen" id="Q6NVH7">
    <property type="glycosylation" value="2 sites, 1 O-linked glycan (1 site)"/>
</dbReference>
<dbReference type="iPTMnet" id="Q6NVH7"/>
<dbReference type="PhosphoSitePlus" id="Q6NVH7"/>
<dbReference type="BioMuta" id="SWSAP1"/>
<dbReference type="DMDM" id="74736850"/>
<dbReference type="jPOST" id="Q6NVH7"/>
<dbReference type="MassIVE" id="Q6NVH7"/>
<dbReference type="PaxDb" id="9606-ENSP00000310008"/>
<dbReference type="PeptideAtlas" id="Q6NVH7"/>
<dbReference type="ProteomicsDB" id="66719"/>
<dbReference type="Pumba" id="Q6NVH7"/>
<dbReference type="Antibodypedia" id="53827">
    <property type="antibodies" value="57 antibodies from 13 providers"/>
</dbReference>
<dbReference type="DNASU" id="126074"/>
<dbReference type="Ensembl" id="ENST00000312423.4">
    <property type="protein sequence ID" value="ENSP00000310008.1"/>
    <property type="gene ID" value="ENSG00000173928.4"/>
</dbReference>
<dbReference type="GeneID" id="126074"/>
<dbReference type="KEGG" id="hsa:126074"/>
<dbReference type="UCSC" id="uc002mrg.2">
    <property type="organism name" value="human"/>
</dbReference>
<dbReference type="AGR" id="HGNC:26638"/>
<dbReference type="CTD" id="126074"/>
<dbReference type="DisGeNET" id="126074"/>
<dbReference type="GeneCards" id="SWSAP1"/>
<dbReference type="HGNC" id="HGNC:26638">
    <property type="gene designation" value="SWSAP1"/>
</dbReference>
<dbReference type="HPA" id="ENSG00000173928">
    <property type="expression patterns" value="Low tissue specificity"/>
</dbReference>
<dbReference type="MIM" id="614536">
    <property type="type" value="gene"/>
</dbReference>
<dbReference type="neXtProt" id="NX_Q6NVH7"/>
<dbReference type="OpenTargets" id="ENSG00000173928"/>
<dbReference type="PharmGKB" id="PA144596472"/>
<dbReference type="VEuPathDB" id="HostDB:ENSG00000173928"/>
<dbReference type="eggNOG" id="ENOG502S62D">
    <property type="taxonomic scope" value="Eukaryota"/>
</dbReference>
<dbReference type="GeneTree" id="ENSGT00390000007170"/>
<dbReference type="HOGENOM" id="CLU_099283_0_0_1"/>
<dbReference type="InParanoid" id="Q6NVH7"/>
<dbReference type="OMA" id="EMTITPW"/>
<dbReference type="OrthoDB" id="67296at2759"/>
<dbReference type="PAN-GO" id="Q6NVH7">
    <property type="GO annotations" value="3 GO annotations based on evolutionary models"/>
</dbReference>
<dbReference type="PhylomeDB" id="Q6NVH7"/>
<dbReference type="TreeFam" id="TF337313"/>
<dbReference type="PathwayCommons" id="Q6NVH7"/>
<dbReference type="SignaLink" id="Q6NVH7"/>
<dbReference type="BioGRID-ORCS" id="126074">
    <property type="hits" value="13 hits in 1158 CRISPR screens"/>
</dbReference>
<dbReference type="GenomeRNAi" id="126074"/>
<dbReference type="Pharos" id="Q6NVH7">
    <property type="development level" value="Tbio"/>
</dbReference>
<dbReference type="PRO" id="PR:Q6NVH7"/>
<dbReference type="Proteomes" id="UP000005640">
    <property type="component" value="Chromosome 19"/>
</dbReference>
<dbReference type="RNAct" id="Q6NVH7">
    <property type="molecule type" value="protein"/>
</dbReference>
<dbReference type="Bgee" id="ENSG00000173928">
    <property type="expression patterns" value="Expressed in primordial germ cell in gonad and 119 other cell types or tissues"/>
</dbReference>
<dbReference type="ExpressionAtlas" id="Q6NVH7">
    <property type="expression patterns" value="baseline and differential"/>
</dbReference>
<dbReference type="GO" id="GO:0005634">
    <property type="term" value="C:nucleus"/>
    <property type="evidence" value="ECO:0007669"/>
    <property type="project" value="UniProtKB-SubCell"/>
</dbReference>
<dbReference type="GO" id="GO:0097196">
    <property type="term" value="C:Shu complex"/>
    <property type="evidence" value="ECO:0000314"/>
    <property type="project" value="UniProtKB"/>
</dbReference>
<dbReference type="GO" id="GO:0016887">
    <property type="term" value="F:ATP hydrolysis activity"/>
    <property type="evidence" value="ECO:0000314"/>
    <property type="project" value="UniProtKB"/>
</dbReference>
<dbReference type="GO" id="GO:0003697">
    <property type="term" value="F:single-stranded DNA binding"/>
    <property type="evidence" value="ECO:0000314"/>
    <property type="project" value="UniProtKB"/>
</dbReference>
<dbReference type="GO" id="GO:0000724">
    <property type="term" value="P:double-strand break repair via homologous recombination"/>
    <property type="evidence" value="ECO:0000315"/>
    <property type="project" value="UniProtKB"/>
</dbReference>
<dbReference type="GO" id="GO:0050821">
    <property type="term" value="P:protein stabilization"/>
    <property type="evidence" value="ECO:0000315"/>
    <property type="project" value="UniProtKB"/>
</dbReference>
<dbReference type="FunFam" id="3.40.50.300:FF:002015">
    <property type="entry name" value="SWIM-type zinc finger 7 associated protein 1"/>
    <property type="match status" value="1"/>
</dbReference>
<dbReference type="Gene3D" id="3.40.50.300">
    <property type="entry name" value="P-loop containing nucleotide triphosphate hydrolases"/>
    <property type="match status" value="1"/>
</dbReference>
<dbReference type="InterPro" id="IPR027417">
    <property type="entry name" value="P-loop_NTPase"/>
</dbReference>
<dbReference type="PANTHER" id="PTHR28653">
    <property type="match status" value="1"/>
</dbReference>
<dbReference type="PANTHER" id="PTHR28653:SF1">
    <property type="entry name" value="ATPASE SWSAP1"/>
    <property type="match status" value="1"/>
</dbReference>
<dbReference type="SUPFAM" id="SSF52540">
    <property type="entry name" value="P-loop containing nucleoside triphosphate hydrolases"/>
    <property type="match status" value="1"/>
</dbReference>
<name>SWAP1_HUMAN</name>
<comment type="function">
    <text evidence="2">ATPase which is preferentially stimulated by single-stranded DNA and is involved in homologous recombination repair (HRR). Has a DNA-binding activity which is independent of its ATPase activity.</text>
</comment>
<comment type="subunit">
    <text evidence="2">Interacts with ZSWIM7; they form a functional complex involved in homologous recombination repair and stabilize each other. Interacts with RAD51, RAD51B, RAD51C, RAD51D and XRCC3; involved in homologous recombination repair.</text>
</comment>
<comment type="interaction">
    <interactant intactId="EBI-5281637">
        <id>Q6NVH7</id>
    </interactant>
    <interactant intactId="EBI-6255981">
        <id>Q7L775</id>
        <label>EPM2AIP1</label>
    </interactant>
    <organismsDiffer>false</organismsDiffer>
    <experiments>3</experiments>
</comment>
<comment type="interaction">
    <interactant intactId="EBI-5281637">
        <id>Q6NVH7</id>
    </interactant>
    <interactant intactId="EBI-1175604">
        <id>Q9NTI5</id>
        <label>PDS5B</label>
    </interactant>
    <organismsDiffer>false</organismsDiffer>
    <experiments>2</experiments>
</comment>
<comment type="interaction">
    <interactant intactId="EBI-5281637">
        <id>Q6NVH7</id>
    </interactant>
    <interactant intactId="EBI-297202">
        <id>Q06609</id>
        <label>RAD51</label>
    </interactant>
    <organismsDiffer>false</organismsDiffer>
    <experiments>2</experiments>
</comment>
<comment type="interaction">
    <interactant intactId="EBI-5281637">
        <id>Q6NVH7</id>
    </interactant>
    <interactant intactId="EBI-2824089">
        <id>O15315</id>
        <label>RAD51B</label>
    </interactant>
    <organismsDiffer>false</organismsDiffer>
    <experiments>2</experiments>
</comment>
<comment type="interaction">
    <interactant intactId="EBI-5281637">
        <id>Q6NVH7</id>
    </interactant>
    <interactant intactId="EBI-2267048">
        <id>O43502</id>
        <label>RAD51C</label>
    </interactant>
    <organismsDiffer>false</organismsDiffer>
    <experiments>2</experiments>
</comment>
<comment type="interaction">
    <interactant intactId="EBI-5281637">
        <id>Q6NVH7</id>
    </interactant>
    <interactant intactId="EBI-1055693">
        <id>O75771</id>
        <label>RAD51D</label>
    </interactant>
    <organismsDiffer>false</organismsDiffer>
    <experiments>2</experiments>
</comment>
<comment type="interaction">
    <interactant intactId="EBI-5281637">
        <id>Q6NVH7</id>
    </interactant>
    <interactant intactId="EBI-742688">
        <id>Q9NZD8</id>
        <label>SPG21</label>
    </interactant>
    <organismsDiffer>false</organismsDiffer>
    <experiments>6</experiments>
</comment>
<comment type="interaction">
    <interactant intactId="EBI-5281637">
        <id>Q6NVH7</id>
    </interactant>
    <interactant intactId="EBI-11318692">
        <id>Q14159</id>
        <label>SPIDR</label>
    </interactant>
    <organismsDiffer>false</organismsDiffer>
    <experiments>7</experiments>
</comment>
<comment type="interaction">
    <interactant intactId="EBI-5281637">
        <id>Q6NVH7</id>
    </interactant>
    <interactant intactId="EBI-2849976">
        <id>O43542</id>
        <label>XRCC3</label>
    </interactant>
    <organismsDiffer>false</organismsDiffer>
    <experiments>2</experiments>
</comment>
<comment type="interaction">
    <interactant intactId="EBI-5281637">
        <id>Q6NVH7</id>
    </interactant>
    <interactant intactId="EBI-5281647">
        <id>Q19AV6</id>
        <label>ZSWIM7</label>
    </interactant>
    <organismsDiffer>false</organismsDiffer>
    <experiments>18</experiments>
</comment>
<comment type="subcellular location">
    <subcellularLocation>
        <location evidence="4">Nucleus</location>
    </subcellularLocation>
</comment>
<keyword id="KW-0227">DNA damage</keyword>
<keyword id="KW-0233">DNA recombination</keyword>
<keyword id="KW-0234">DNA repair</keyword>
<keyword id="KW-0238">DNA-binding</keyword>
<keyword id="KW-0539">Nucleus</keyword>
<keyword id="KW-1267">Proteomics identification</keyword>
<keyword id="KW-1185">Reference proteome</keyword>
<proteinExistence type="evidence at protein level"/>
<evidence type="ECO:0000256" key="1">
    <source>
        <dbReference type="SAM" id="MobiDB-lite"/>
    </source>
</evidence>
<evidence type="ECO:0000269" key="2">
    <source>
    </source>
</evidence>
<evidence type="ECO:0000305" key="3"/>
<evidence type="ECO:0000305" key="4">
    <source>
    </source>
</evidence>
<gene>
    <name type="primary">SWSAP1</name>
    <name type="synonym">C19orf39</name>
</gene>
<organism>
    <name type="scientific">Homo sapiens</name>
    <name type="common">Human</name>
    <dbReference type="NCBI Taxonomy" id="9606"/>
    <lineage>
        <taxon>Eukaryota</taxon>
        <taxon>Metazoa</taxon>
        <taxon>Chordata</taxon>
        <taxon>Craniata</taxon>
        <taxon>Vertebrata</taxon>
        <taxon>Euteleostomi</taxon>
        <taxon>Mammalia</taxon>
        <taxon>Eutheria</taxon>
        <taxon>Euarchontoglires</taxon>
        <taxon>Primates</taxon>
        <taxon>Haplorrhini</taxon>
        <taxon>Catarrhini</taxon>
        <taxon>Hominidae</taxon>
        <taxon>Homo</taxon>
    </lineage>
</organism>